<sequence>MYMSTDEIRRAFLAFFESKGHQIVESSSLVPANDPTLLFTNAGMNQFKDCFLGSEKRNYTRATTAQRCVRAGGKHNDLENVGFTARHHTFFEMLGNFSFGDYFKQDAIKYAWEFLTERLELPADRLLVTVYETDDEAFEIWNKEMGIPADRIVRIGDNKGAPYASDNFWQMGDTGPCGPCTEIFYDHGEHIWGGRPGTPEEDGDRFIEIWNNVFMQFNRHADGTMEPLPKPSVDTGMGIERIAAIMQGVHSNYEIDIFQTLIKEAAKVIGYDDLSNQSLRVVADHIRSCSYLIVDGVMPSNEGRGYVLRRIIRRAVRHGNKLGAKGSYFYKLVGPLAEIMGTAGEELKKQQALVEKVLKIEEENFGRTLERGMAILNEALDNLEGTVLDGETVFKLYDTYGFPADLTNDVARERELTIDEDGFEKAMEEQRQRAREAGQFGTDYNAVIKVESETVFHGYDSTEAKASVVALFREGEEVDALSAGDDAILILDQTPFYAESGGQCGDAGIITVETGKFVVTDTHKIGNAIGHHGKLVEGVLSKADHAMAQVDETRRAAIILNHSATHLLHAALRQVLGEHVTQKGSLVKAENLRFDFSHLEAVKAEELRQVERIVNQQIRLNHTIETDLMDIDAAKEKGAMALFGEKYDDEVRVLSMGEFSTELCGGIHASSTGDIGLFKITSEGGIAAGIRRIEAVTGEAALDAIEAQQKAADKKLNEAASKAKQLEKEIQQLKDKLASQESASLINKVQEIAGTKVLVAQLDGAENKALRGMVDELKNQIGSGIIMLGNVSEGKVGLIAGVTKDLIGQVKAGELVNMVAQQVGGKGGGRPDMAQAGGTDAEALPNALASVEAWLTERL</sequence>
<organism>
    <name type="scientific">Aliivibrio fischeri (strain ATCC 700601 / ES114)</name>
    <name type="common">Vibrio fischeri</name>
    <dbReference type="NCBI Taxonomy" id="312309"/>
    <lineage>
        <taxon>Bacteria</taxon>
        <taxon>Pseudomonadati</taxon>
        <taxon>Pseudomonadota</taxon>
        <taxon>Gammaproteobacteria</taxon>
        <taxon>Vibrionales</taxon>
        <taxon>Vibrionaceae</taxon>
        <taxon>Aliivibrio</taxon>
    </lineage>
</organism>
<accession>Q5E7G5</accession>
<keyword id="KW-0030">Aminoacyl-tRNA synthetase</keyword>
<keyword id="KW-0067">ATP-binding</keyword>
<keyword id="KW-0963">Cytoplasm</keyword>
<keyword id="KW-0436">Ligase</keyword>
<keyword id="KW-0479">Metal-binding</keyword>
<keyword id="KW-0547">Nucleotide-binding</keyword>
<keyword id="KW-0648">Protein biosynthesis</keyword>
<keyword id="KW-1185">Reference proteome</keyword>
<keyword id="KW-0694">RNA-binding</keyword>
<keyword id="KW-0820">tRNA-binding</keyword>
<keyword id="KW-0862">Zinc</keyword>
<evidence type="ECO:0000255" key="1">
    <source>
        <dbReference type="HAMAP-Rule" id="MF_00036"/>
    </source>
</evidence>
<gene>
    <name evidence="1" type="primary">alaS</name>
    <name type="ordered locus">VF_0536</name>
</gene>
<feature type="chain" id="PRO_0000075242" description="Alanine--tRNA ligase">
    <location>
        <begin position="1"/>
        <end position="859"/>
    </location>
</feature>
<feature type="binding site" evidence="1">
    <location>
        <position position="562"/>
    </location>
    <ligand>
        <name>Zn(2+)</name>
        <dbReference type="ChEBI" id="CHEBI:29105"/>
    </ligand>
</feature>
<feature type="binding site" evidence="1">
    <location>
        <position position="566"/>
    </location>
    <ligand>
        <name>Zn(2+)</name>
        <dbReference type="ChEBI" id="CHEBI:29105"/>
    </ligand>
</feature>
<feature type="binding site" evidence="1">
    <location>
        <position position="664"/>
    </location>
    <ligand>
        <name>Zn(2+)</name>
        <dbReference type="ChEBI" id="CHEBI:29105"/>
    </ligand>
</feature>
<feature type="binding site" evidence="1">
    <location>
        <position position="668"/>
    </location>
    <ligand>
        <name>Zn(2+)</name>
        <dbReference type="ChEBI" id="CHEBI:29105"/>
    </ligand>
</feature>
<comment type="function">
    <text evidence="1">Catalyzes the attachment of alanine to tRNA(Ala) in a two-step reaction: alanine is first activated by ATP to form Ala-AMP and then transferred to the acceptor end of tRNA(Ala). Also edits incorrectly charged Ser-tRNA(Ala) and Gly-tRNA(Ala) via its editing domain.</text>
</comment>
<comment type="catalytic activity">
    <reaction evidence="1">
        <text>tRNA(Ala) + L-alanine + ATP = L-alanyl-tRNA(Ala) + AMP + diphosphate</text>
        <dbReference type="Rhea" id="RHEA:12540"/>
        <dbReference type="Rhea" id="RHEA-COMP:9657"/>
        <dbReference type="Rhea" id="RHEA-COMP:9923"/>
        <dbReference type="ChEBI" id="CHEBI:30616"/>
        <dbReference type="ChEBI" id="CHEBI:33019"/>
        <dbReference type="ChEBI" id="CHEBI:57972"/>
        <dbReference type="ChEBI" id="CHEBI:78442"/>
        <dbReference type="ChEBI" id="CHEBI:78497"/>
        <dbReference type="ChEBI" id="CHEBI:456215"/>
        <dbReference type="EC" id="6.1.1.7"/>
    </reaction>
</comment>
<comment type="cofactor">
    <cofactor evidence="1">
        <name>Zn(2+)</name>
        <dbReference type="ChEBI" id="CHEBI:29105"/>
    </cofactor>
    <text evidence="1">Binds 1 zinc ion per subunit.</text>
</comment>
<comment type="subcellular location">
    <subcellularLocation>
        <location evidence="1">Cytoplasm</location>
    </subcellularLocation>
</comment>
<comment type="domain">
    <text evidence="1">Consists of three domains; the N-terminal catalytic domain, the editing domain and the C-terminal C-Ala domain. The editing domain removes incorrectly charged amino acids, while the C-Ala domain, along with tRNA(Ala), serves as a bridge to cooperatively bring together the editing and aminoacylation centers thus stimulating deacylation of misacylated tRNAs.</text>
</comment>
<comment type="similarity">
    <text evidence="1">Belongs to the class-II aminoacyl-tRNA synthetase family.</text>
</comment>
<proteinExistence type="inferred from homology"/>
<dbReference type="EC" id="6.1.1.7" evidence="1"/>
<dbReference type="EMBL" id="CP000020">
    <property type="protein sequence ID" value="AAW85031.1"/>
    <property type="molecule type" value="Genomic_DNA"/>
</dbReference>
<dbReference type="RefSeq" id="WP_011261300.1">
    <property type="nucleotide sequence ID" value="NC_006840.2"/>
</dbReference>
<dbReference type="RefSeq" id="YP_203919.1">
    <property type="nucleotide sequence ID" value="NC_006840.2"/>
</dbReference>
<dbReference type="SMR" id="Q5E7G5"/>
<dbReference type="STRING" id="312309.VF_0536"/>
<dbReference type="EnsemblBacteria" id="AAW85031">
    <property type="protein sequence ID" value="AAW85031"/>
    <property type="gene ID" value="VF_0536"/>
</dbReference>
<dbReference type="GeneID" id="54163174"/>
<dbReference type="KEGG" id="vfi:VF_0536"/>
<dbReference type="PATRIC" id="fig|312309.11.peg.528"/>
<dbReference type="eggNOG" id="COG0013">
    <property type="taxonomic scope" value="Bacteria"/>
</dbReference>
<dbReference type="HOGENOM" id="CLU_004485_1_1_6"/>
<dbReference type="OrthoDB" id="9803884at2"/>
<dbReference type="Proteomes" id="UP000000537">
    <property type="component" value="Chromosome I"/>
</dbReference>
<dbReference type="GO" id="GO:0005829">
    <property type="term" value="C:cytosol"/>
    <property type="evidence" value="ECO:0007669"/>
    <property type="project" value="TreeGrafter"/>
</dbReference>
<dbReference type="GO" id="GO:0004813">
    <property type="term" value="F:alanine-tRNA ligase activity"/>
    <property type="evidence" value="ECO:0007669"/>
    <property type="project" value="UniProtKB-UniRule"/>
</dbReference>
<dbReference type="GO" id="GO:0002161">
    <property type="term" value="F:aminoacyl-tRNA deacylase activity"/>
    <property type="evidence" value="ECO:0007669"/>
    <property type="project" value="TreeGrafter"/>
</dbReference>
<dbReference type="GO" id="GO:0005524">
    <property type="term" value="F:ATP binding"/>
    <property type="evidence" value="ECO:0007669"/>
    <property type="project" value="UniProtKB-UniRule"/>
</dbReference>
<dbReference type="GO" id="GO:0000049">
    <property type="term" value="F:tRNA binding"/>
    <property type="evidence" value="ECO:0007669"/>
    <property type="project" value="UniProtKB-KW"/>
</dbReference>
<dbReference type="GO" id="GO:0008270">
    <property type="term" value="F:zinc ion binding"/>
    <property type="evidence" value="ECO:0007669"/>
    <property type="project" value="UniProtKB-UniRule"/>
</dbReference>
<dbReference type="GO" id="GO:0006419">
    <property type="term" value="P:alanyl-tRNA aminoacylation"/>
    <property type="evidence" value="ECO:0007669"/>
    <property type="project" value="UniProtKB-UniRule"/>
</dbReference>
<dbReference type="GO" id="GO:0045892">
    <property type="term" value="P:negative regulation of DNA-templated transcription"/>
    <property type="evidence" value="ECO:0007669"/>
    <property type="project" value="TreeGrafter"/>
</dbReference>
<dbReference type="CDD" id="cd00673">
    <property type="entry name" value="AlaRS_core"/>
    <property type="match status" value="1"/>
</dbReference>
<dbReference type="FunFam" id="2.40.30.130:FF:000001">
    <property type="entry name" value="Alanine--tRNA ligase"/>
    <property type="match status" value="1"/>
</dbReference>
<dbReference type="FunFam" id="3.10.310.40:FF:000001">
    <property type="entry name" value="Alanine--tRNA ligase"/>
    <property type="match status" value="1"/>
</dbReference>
<dbReference type="FunFam" id="3.30.54.20:FF:000001">
    <property type="entry name" value="Alanine--tRNA ligase"/>
    <property type="match status" value="1"/>
</dbReference>
<dbReference type="FunFam" id="3.30.930.10:FF:000004">
    <property type="entry name" value="Alanine--tRNA ligase"/>
    <property type="match status" value="1"/>
</dbReference>
<dbReference type="FunFam" id="3.30.980.10:FF:000004">
    <property type="entry name" value="Alanine--tRNA ligase, cytoplasmic"/>
    <property type="match status" value="1"/>
</dbReference>
<dbReference type="Gene3D" id="2.40.30.130">
    <property type="match status" value="1"/>
</dbReference>
<dbReference type="Gene3D" id="3.10.310.40">
    <property type="match status" value="1"/>
</dbReference>
<dbReference type="Gene3D" id="3.30.54.20">
    <property type="match status" value="1"/>
</dbReference>
<dbReference type="Gene3D" id="3.30.930.10">
    <property type="entry name" value="Bira Bifunctional Protein, Domain 2"/>
    <property type="match status" value="1"/>
</dbReference>
<dbReference type="Gene3D" id="3.30.980.10">
    <property type="entry name" value="Threonyl-trna Synthetase, Chain A, domain 2"/>
    <property type="match status" value="1"/>
</dbReference>
<dbReference type="HAMAP" id="MF_00036_B">
    <property type="entry name" value="Ala_tRNA_synth_B"/>
    <property type="match status" value="1"/>
</dbReference>
<dbReference type="InterPro" id="IPR045864">
    <property type="entry name" value="aa-tRNA-synth_II/BPL/LPL"/>
</dbReference>
<dbReference type="InterPro" id="IPR002318">
    <property type="entry name" value="Ala-tRNA-lgiase_IIc"/>
</dbReference>
<dbReference type="InterPro" id="IPR018162">
    <property type="entry name" value="Ala-tRNA-ligase_IIc_anticod-bd"/>
</dbReference>
<dbReference type="InterPro" id="IPR018165">
    <property type="entry name" value="Ala-tRNA-synth_IIc_core"/>
</dbReference>
<dbReference type="InterPro" id="IPR018164">
    <property type="entry name" value="Ala-tRNA-synth_IIc_N"/>
</dbReference>
<dbReference type="InterPro" id="IPR050058">
    <property type="entry name" value="Ala-tRNA_ligase"/>
</dbReference>
<dbReference type="InterPro" id="IPR023033">
    <property type="entry name" value="Ala_tRNA_ligase_euk/bac"/>
</dbReference>
<dbReference type="InterPro" id="IPR003156">
    <property type="entry name" value="DHHA1_dom"/>
</dbReference>
<dbReference type="InterPro" id="IPR018163">
    <property type="entry name" value="Thr/Ala-tRNA-synth_IIc_edit"/>
</dbReference>
<dbReference type="InterPro" id="IPR009000">
    <property type="entry name" value="Transl_B-barrel_sf"/>
</dbReference>
<dbReference type="InterPro" id="IPR012947">
    <property type="entry name" value="tRNA_SAD"/>
</dbReference>
<dbReference type="NCBIfam" id="TIGR00344">
    <property type="entry name" value="alaS"/>
    <property type="match status" value="1"/>
</dbReference>
<dbReference type="PANTHER" id="PTHR11777:SF9">
    <property type="entry name" value="ALANINE--TRNA LIGASE, CYTOPLASMIC"/>
    <property type="match status" value="1"/>
</dbReference>
<dbReference type="PANTHER" id="PTHR11777">
    <property type="entry name" value="ALANYL-TRNA SYNTHETASE"/>
    <property type="match status" value="1"/>
</dbReference>
<dbReference type="Pfam" id="PF02272">
    <property type="entry name" value="DHHA1"/>
    <property type="match status" value="1"/>
</dbReference>
<dbReference type="Pfam" id="PF01411">
    <property type="entry name" value="tRNA-synt_2c"/>
    <property type="match status" value="1"/>
</dbReference>
<dbReference type="Pfam" id="PF07973">
    <property type="entry name" value="tRNA_SAD"/>
    <property type="match status" value="1"/>
</dbReference>
<dbReference type="PRINTS" id="PR00980">
    <property type="entry name" value="TRNASYNTHALA"/>
</dbReference>
<dbReference type="SMART" id="SM00863">
    <property type="entry name" value="tRNA_SAD"/>
    <property type="match status" value="1"/>
</dbReference>
<dbReference type="SUPFAM" id="SSF55681">
    <property type="entry name" value="Class II aaRS and biotin synthetases"/>
    <property type="match status" value="1"/>
</dbReference>
<dbReference type="SUPFAM" id="SSF101353">
    <property type="entry name" value="Putative anticodon-binding domain of alanyl-tRNA synthetase (AlaRS)"/>
    <property type="match status" value="1"/>
</dbReference>
<dbReference type="SUPFAM" id="SSF55186">
    <property type="entry name" value="ThrRS/AlaRS common domain"/>
    <property type="match status" value="1"/>
</dbReference>
<dbReference type="SUPFAM" id="SSF50447">
    <property type="entry name" value="Translation proteins"/>
    <property type="match status" value="1"/>
</dbReference>
<dbReference type="PROSITE" id="PS50860">
    <property type="entry name" value="AA_TRNA_LIGASE_II_ALA"/>
    <property type="match status" value="1"/>
</dbReference>
<reference key="1">
    <citation type="journal article" date="2005" name="Proc. Natl. Acad. Sci. U.S.A.">
        <title>Complete genome sequence of Vibrio fischeri: a symbiotic bacterium with pathogenic congeners.</title>
        <authorList>
            <person name="Ruby E.G."/>
            <person name="Urbanowski M."/>
            <person name="Campbell J."/>
            <person name="Dunn A."/>
            <person name="Faini M."/>
            <person name="Gunsalus R."/>
            <person name="Lostroh P."/>
            <person name="Lupp C."/>
            <person name="McCann J."/>
            <person name="Millikan D."/>
            <person name="Schaefer A."/>
            <person name="Stabb E."/>
            <person name="Stevens A."/>
            <person name="Visick K."/>
            <person name="Whistler C."/>
            <person name="Greenberg E.P."/>
        </authorList>
    </citation>
    <scope>NUCLEOTIDE SEQUENCE [LARGE SCALE GENOMIC DNA]</scope>
    <source>
        <strain>ATCC 700601 / ES114</strain>
    </source>
</reference>
<name>SYA_ALIF1</name>
<protein>
    <recommendedName>
        <fullName evidence="1">Alanine--tRNA ligase</fullName>
        <ecNumber evidence="1">6.1.1.7</ecNumber>
    </recommendedName>
    <alternativeName>
        <fullName evidence="1">Alanyl-tRNA synthetase</fullName>
        <shortName evidence="1">AlaRS</shortName>
    </alternativeName>
</protein>